<comment type="function">
    <text evidence="1">Involved in transcription antitermination. Required for transcription of ribosomal RNA (rRNA) genes. Binds specifically to the boxA antiterminator sequence of the ribosomal RNA (rrn) operons.</text>
</comment>
<comment type="interaction">
    <interactant intactId="EBI-6474808">
        <id>P65582</id>
    </interactant>
    <interactant intactId="EBI-6474805">
        <id>A0A0H2UPA1</id>
        <label>SP_0767</label>
    </interactant>
    <organismsDiffer>false</organismsDiffer>
    <experiments>2</experiments>
</comment>
<comment type="similarity">
    <text evidence="1">Belongs to the NusB family.</text>
</comment>
<sequence length="140" mass="15964">MTSPLLESRRQLRKCAFQALMSLEFGTDVETACRFAYTHDREDTDVQLPAFLIDLVSGVQAKKEELDKQITQHLKAGWTIERLTLVERNLLRLGVFEITSFDTPQLVAVNEAIELAKDFSDQKSARFINGLLSQFVTEEQ</sequence>
<feature type="chain" id="PRO_0000176590" description="Transcription antitermination protein NusB">
    <location>
        <begin position="1"/>
        <end position="140"/>
    </location>
</feature>
<gene>
    <name evidence="1" type="primary">nusB</name>
    <name type="ordered locus">SP_0433</name>
</gene>
<name>NUSB_STRPN</name>
<dbReference type="EMBL" id="AE005672">
    <property type="protein sequence ID" value="AAK74595.1"/>
    <property type="molecule type" value="Genomic_DNA"/>
</dbReference>
<dbReference type="PIR" id="B95050">
    <property type="entry name" value="B95050"/>
</dbReference>
<dbReference type="RefSeq" id="WP_000203654.1">
    <property type="nucleotide sequence ID" value="NZ_CP155539.1"/>
</dbReference>
<dbReference type="SMR" id="P65582"/>
<dbReference type="IntAct" id="P65582">
    <property type="interactions" value="1"/>
</dbReference>
<dbReference type="PaxDb" id="170187-SP_0433"/>
<dbReference type="EnsemblBacteria" id="AAK74595">
    <property type="protein sequence ID" value="AAK74595"/>
    <property type="gene ID" value="SP_0433"/>
</dbReference>
<dbReference type="GeneID" id="45652116"/>
<dbReference type="KEGG" id="spn:SP_0433"/>
<dbReference type="eggNOG" id="COG0781">
    <property type="taxonomic scope" value="Bacteria"/>
</dbReference>
<dbReference type="PhylomeDB" id="P65582"/>
<dbReference type="BioCyc" id="SPNE170187:G1FZB-448-MONOMER"/>
<dbReference type="Proteomes" id="UP000000585">
    <property type="component" value="Chromosome"/>
</dbReference>
<dbReference type="GO" id="GO:0005829">
    <property type="term" value="C:cytosol"/>
    <property type="evidence" value="ECO:0007669"/>
    <property type="project" value="TreeGrafter"/>
</dbReference>
<dbReference type="GO" id="GO:0003723">
    <property type="term" value="F:RNA binding"/>
    <property type="evidence" value="ECO:0007669"/>
    <property type="project" value="UniProtKB-UniRule"/>
</dbReference>
<dbReference type="GO" id="GO:0006353">
    <property type="term" value="P:DNA-templated transcription termination"/>
    <property type="evidence" value="ECO:0007669"/>
    <property type="project" value="UniProtKB-UniRule"/>
</dbReference>
<dbReference type="GO" id="GO:0031564">
    <property type="term" value="P:transcription antitermination"/>
    <property type="evidence" value="ECO:0007669"/>
    <property type="project" value="UniProtKB-KW"/>
</dbReference>
<dbReference type="FunFam" id="1.10.940.10:FF:000008">
    <property type="entry name" value="Transcription antitermination protein NusB"/>
    <property type="match status" value="1"/>
</dbReference>
<dbReference type="Gene3D" id="1.10.940.10">
    <property type="entry name" value="NusB-like"/>
    <property type="match status" value="1"/>
</dbReference>
<dbReference type="HAMAP" id="MF_00073">
    <property type="entry name" value="NusB"/>
    <property type="match status" value="1"/>
</dbReference>
<dbReference type="InterPro" id="IPR035926">
    <property type="entry name" value="NusB-like_sf"/>
</dbReference>
<dbReference type="InterPro" id="IPR011605">
    <property type="entry name" value="NusB_fam"/>
</dbReference>
<dbReference type="InterPro" id="IPR006027">
    <property type="entry name" value="NusB_RsmB_TIM44"/>
</dbReference>
<dbReference type="NCBIfam" id="TIGR01951">
    <property type="entry name" value="nusB"/>
    <property type="match status" value="1"/>
</dbReference>
<dbReference type="NCBIfam" id="NF001223">
    <property type="entry name" value="PRK00202.1-1"/>
    <property type="match status" value="1"/>
</dbReference>
<dbReference type="PANTHER" id="PTHR11078:SF3">
    <property type="entry name" value="ANTITERMINATION NUSB DOMAIN-CONTAINING PROTEIN"/>
    <property type="match status" value="1"/>
</dbReference>
<dbReference type="PANTHER" id="PTHR11078">
    <property type="entry name" value="N UTILIZATION SUBSTANCE PROTEIN B-RELATED"/>
    <property type="match status" value="1"/>
</dbReference>
<dbReference type="Pfam" id="PF01029">
    <property type="entry name" value="NusB"/>
    <property type="match status" value="1"/>
</dbReference>
<dbReference type="SUPFAM" id="SSF48013">
    <property type="entry name" value="NusB-like"/>
    <property type="match status" value="1"/>
</dbReference>
<organism>
    <name type="scientific">Streptococcus pneumoniae serotype 4 (strain ATCC BAA-334 / TIGR4)</name>
    <dbReference type="NCBI Taxonomy" id="170187"/>
    <lineage>
        <taxon>Bacteria</taxon>
        <taxon>Bacillati</taxon>
        <taxon>Bacillota</taxon>
        <taxon>Bacilli</taxon>
        <taxon>Lactobacillales</taxon>
        <taxon>Streptococcaceae</taxon>
        <taxon>Streptococcus</taxon>
    </lineage>
</organism>
<accession>P65582</accession>
<accession>Q97SF0</accession>
<protein>
    <recommendedName>
        <fullName evidence="1">Transcription antitermination protein NusB</fullName>
    </recommendedName>
    <alternativeName>
        <fullName evidence="1">Antitermination factor NusB</fullName>
    </alternativeName>
</protein>
<evidence type="ECO:0000255" key="1">
    <source>
        <dbReference type="HAMAP-Rule" id="MF_00073"/>
    </source>
</evidence>
<proteinExistence type="evidence at protein level"/>
<keyword id="KW-1185">Reference proteome</keyword>
<keyword id="KW-0694">RNA-binding</keyword>
<keyword id="KW-0804">Transcription</keyword>
<keyword id="KW-0889">Transcription antitermination</keyword>
<keyword id="KW-0805">Transcription regulation</keyword>
<reference key="1">
    <citation type="journal article" date="2001" name="Science">
        <title>Complete genome sequence of a virulent isolate of Streptococcus pneumoniae.</title>
        <authorList>
            <person name="Tettelin H."/>
            <person name="Nelson K.E."/>
            <person name="Paulsen I.T."/>
            <person name="Eisen J.A."/>
            <person name="Read T.D."/>
            <person name="Peterson S.N."/>
            <person name="Heidelberg J.F."/>
            <person name="DeBoy R.T."/>
            <person name="Haft D.H."/>
            <person name="Dodson R.J."/>
            <person name="Durkin A.S."/>
            <person name="Gwinn M.L."/>
            <person name="Kolonay J.F."/>
            <person name="Nelson W.C."/>
            <person name="Peterson J.D."/>
            <person name="Umayam L.A."/>
            <person name="White O."/>
            <person name="Salzberg S.L."/>
            <person name="Lewis M.R."/>
            <person name="Radune D."/>
            <person name="Holtzapple E.K."/>
            <person name="Khouri H.M."/>
            <person name="Wolf A.M."/>
            <person name="Utterback T.R."/>
            <person name="Hansen C.L."/>
            <person name="McDonald L.A."/>
            <person name="Feldblyum T.V."/>
            <person name="Angiuoli S.V."/>
            <person name="Dickinson T."/>
            <person name="Hickey E.K."/>
            <person name="Holt I.E."/>
            <person name="Loftus B.J."/>
            <person name="Yang F."/>
            <person name="Smith H.O."/>
            <person name="Venter J.C."/>
            <person name="Dougherty B.A."/>
            <person name="Morrison D.A."/>
            <person name="Hollingshead S.K."/>
            <person name="Fraser C.M."/>
        </authorList>
    </citation>
    <scope>NUCLEOTIDE SEQUENCE [LARGE SCALE GENOMIC DNA]</scope>
    <source>
        <strain>ATCC BAA-334 / TIGR4</strain>
    </source>
</reference>